<organism>
    <name type="scientific">Burkholderia orbicola (strain AU 1054)</name>
    <dbReference type="NCBI Taxonomy" id="331271"/>
    <lineage>
        <taxon>Bacteria</taxon>
        <taxon>Pseudomonadati</taxon>
        <taxon>Pseudomonadota</taxon>
        <taxon>Betaproteobacteria</taxon>
        <taxon>Burkholderiales</taxon>
        <taxon>Burkholderiaceae</taxon>
        <taxon>Burkholderia</taxon>
        <taxon>Burkholderia cepacia complex</taxon>
        <taxon>Burkholderia orbicola</taxon>
    </lineage>
</organism>
<name>DAPB_BURO1</name>
<dbReference type="EC" id="1.17.1.8" evidence="1"/>
<dbReference type="EMBL" id="CP000378">
    <property type="protein sequence ID" value="ABF75082.1"/>
    <property type="molecule type" value="Genomic_DNA"/>
</dbReference>
<dbReference type="SMR" id="Q1BZ73"/>
<dbReference type="HOGENOM" id="CLU_047479_2_1_4"/>
<dbReference type="UniPathway" id="UPA00034">
    <property type="reaction ID" value="UER00018"/>
</dbReference>
<dbReference type="GO" id="GO:0005829">
    <property type="term" value="C:cytosol"/>
    <property type="evidence" value="ECO:0007669"/>
    <property type="project" value="TreeGrafter"/>
</dbReference>
<dbReference type="GO" id="GO:0008839">
    <property type="term" value="F:4-hydroxy-tetrahydrodipicolinate reductase"/>
    <property type="evidence" value="ECO:0007669"/>
    <property type="project" value="UniProtKB-EC"/>
</dbReference>
<dbReference type="GO" id="GO:0051287">
    <property type="term" value="F:NAD binding"/>
    <property type="evidence" value="ECO:0007669"/>
    <property type="project" value="UniProtKB-UniRule"/>
</dbReference>
<dbReference type="GO" id="GO:0050661">
    <property type="term" value="F:NADP binding"/>
    <property type="evidence" value="ECO:0007669"/>
    <property type="project" value="UniProtKB-UniRule"/>
</dbReference>
<dbReference type="GO" id="GO:0016726">
    <property type="term" value="F:oxidoreductase activity, acting on CH or CH2 groups, NAD or NADP as acceptor"/>
    <property type="evidence" value="ECO:0007669"/>
    <property type="project" value="UniProtKB-UniRule"/>
</dbReference>
<dbReference type="GO" id="GO:0019877">
    <property type="term" value="P:diaminopimelate biosynthetic process"/>
    <property type="evidence" value="ECO:0007669"/>
    <property type="project" value="UniProtKB-UniRule"/>
</dbReference>
<dbReference type="GO" id="GO:0009089">
    <property type="term" value="P:lysine biosynthetic process via diaminopimelate"/>
    <property type="evidence" value="ECO:0007669"/>
    <property type="project" value="UniProtKB-UniRule"/>
</dbReference>
<dbReference type="CDD" id="cd02274">
    <property type="entry name" value="DHDPR_N"/>
    <property type="match status" value="1"/>
</dbReference>
<dbReference type="FunFam" id="3.30.360.10:FF:000004">
    <property type="entry name" value="4-hydroxy-tetrahydrodipicolinate reductase"/>
    <property type="match status" value="1"/>
</dbReference>
<dbReference type="FunFam" id="3.40.50.720:FF:000048">
    <property type="entry name" value="4-hydroxy-tetrahydrodipicolinate reductase"/>
    <property type="match status" value="1"/>
</dbReference>
<dbReference type="Gene3D" id="3.30.360.10">
    <property type="entry name" value="Dihydrodipicolinate Reductase, domain 2"/>
    <property type="match status" value="1"/>
</dbReference>
<dbReference type="Gene3D" id="3.40.50.720">
    <property type="entry name" value="NAD(P)-binding Rossmann-like Domain"/>
    <property type="match status" value="1"/>
</dbReference>
<dbReference type="HAMAP" id="MF_00102">
    <property type="entry name" value="DapB"/>
    <property type="match status" value="1"/>
</dbReference>
<dbReference type="InterPro" id="IPR022663">
    <property type="entry name" value="DapB_C"/>
</dbReference>
<dbReference type="InterPro" id="IPR000846">
    <property type="entry name" value="DapB_N"/>
</dbReference>
<dbReference type="InterPro" id="IPR022664">
    <property type="entry name" value="DapB_N_CS"/>
</dbReference>
<dbReference type="InterPro" id="IPR023940">
    <property type="entry name" value="DHDPR_bac"/>
</dbReference>
<dbReference type="InterPro" id="IPR036291">
    <property type="entry name" value="NAD(P)-bd_dom_sf"/>
</dbReference>
<dbReference type="NCBIfam" id="TIGR00036">
    <property type="entry name" value="dapB"/>
    <property type="match status" value="1"/>
</dbReference>
<dbReference type="PANTHER" id="PTHR20836:SF0">
    <property type="entry name" value="4-HYDROXY-TETRAHYDRODIPICOLINATE REDUCTASE 1, CHLOROPLASTIC-RELATED"/>
    <property type="match status" value="1"/>
</dbReference>
<dbReference type="PANTHER" id="PTHR20836">
    <property type="entry name" value="DIHYDRODIPICOLINATE REDUCTASE"/>
    <property type="match status" value="1"/>
</dbReference>
<dbReference type="Pfam" id="PF05173">
    <property type="entry name" value="DapB_C"/>
    <property type="match status" value="1"/>
</dbReference>
<dbReference type="Pfam" id="PF01113">
    <property type="entry name" value="DapB_N"/>
    <property type="match status" value="1"/>
</dbReference>
<dbReference type="PIRSF" id="PIRSF000161">
    <property type="entry name" value="DHPR"/>
    <property type="match status" value="1"/>
</dbReference>
<dbReference type="SUPFAM" id="SSF55347">
    <property type="entry name" value="Glyceraldehyde-3-phosphate dehydrogenase-like, C-terminal domain"/>
    <property type="match status" value="1"/>
</dbReference>
<dbReference type="SUPFAM" id="SSF51735">
    <property type="entry name" value="NAD(P)-binding Rossmann-fold domains"/>
    <property type="match status" value="1"/>
</dbReference>
<dbReference type="PROSITE" id="PS01298">
    <property type="entry name" value="DAPB"/>
    <property type="match status" value="1"/>
</dbReference>
<sequence>MKIAIAGASGRMGRMLIEAVLNDADAQLVGALDRAGSPFLGQDAGAFLGKDTGVKLTDDLDAVFAQAEYLIDFTRPEGTMAHIEAALRHDVKLVIGTTGFTAEQKADLQAAAARIGIVFAANMSVGVNVTLKLLEFAAQHFSHGYDIEIIEAHHRHKVDAPSGTALMMGEAVAGALGRSLDDCAVYGRHGVTGERDPSSIGFAAVRGGDIVGDHTVLFAGIGERIEITHKSSSRVSYAQGALRAVRFLSARGAGLFDMQDVLGLR</sequence>
<evidence type="ECO:0000255" key="1">
    <source>
        <dbReference type="HAMAP-Rule" id="MF_00102"/>
    </source>
</evidence>
<evidence type="ECO:0000305" key="2"/>
<protein>
    <recommendedName>
        <fullName evidence="1">4-hydroxy-tetrahydrodipicolinate reductase</fullName>
        <shortName evidence="1">HTPA reductase</shortName>
        <ecNumber evidence="1">1.17.1.8</ecNumber>
    </recommendedName>
</protein>
<comment type="function">
    <text evidence="1">Catalyzes the conversion of 4-hydroxy-tetrahydrodipicolinate (HTPA) to tetrahydrodipicolinate.</text>
</comment>
<comment type="catalytic activity">
    <reaction evidence="1">
        <text>(S)-2,3,4,5-tetrahydrodipicolinate + NAD(+) + H2O = (2S,4S)-4-hydroxy-2,3,4,5-tetrahydrodipicolinate + NADH + H(+)</text>
        <dbReference type="Rhea" id="RHEA:35323"/>
        <dbReference type="ChEBI" id="CHEBI:15377"/>
        <dbReference type="ChEBI" id="CHEBI:15378"/>
        <dbReference type="ChEBI" id="CHEBI:16845"/>
        <dbReference type="ChEBI" id="CHEBI:57540"/>
        <dbReference type="ChEBI" id="CHEBI:57945"/>
        <dbReference type="ChEBI" id="CHEBI:67139"/>
        <dbReference type="EC" id="1.17.1.8"/>
    </reaction>
</comment>
<comment type="catalytic activity">
    <reaction evidence="1">
        <text>(S)-2,3,4,5-tetrahydrodipicolinate + NADP(+) + H2O = (2S,4S)-4-hydroxy-2,3,4,5-tetrahydrodipicolinate + NADPH + H(+)</text>
        <dbReference type="Rhea" id="RHEA:35331"/>
        <dbReference type="ChEBI" id="CHEBI:15377"/>
        <dbReference type="ChEBI" id="CHEBI:15378"/>
        <dbReference type="ChEBI" id="CHEBI:16845"/>
        <dbReference type="ChEBI" id="CHEBI:57783"/>
        <dbReference type="ChEBI" id="CHEBI:58349"/>
        <dbReference type="ChEBI" id="CHEBI:67139"/>
        <dbReference type="EC" id="1.17.1.8"/>
    </reaction>
</comment>
<comment type="pathway">
    <text evidence="1">Amino-acid biosynthesis; L-lysine biosynthesis via DAP pathway; (S)-tetrahydrodipicolinate from L-aspartate: step 4/4.</text>
</comment>
<comment type="subcellular location">
    <subcellularLocation>
        <location evidence="1">Cytoplasm</location>
    </subcellularLocation>
</comment>
<comment type="similarity">
    <text evidence="1">Belongs to the DapB family.</text>
</comment>
<comment type="caution">
    <text evidence="2">Was originally thought to be a dihydrodipicolinate reductase (DHDPR), catalyzing the conversion of dihydrodipicolinate to tetrahydrodipicolinate. However, it was shown in E.coli that the substrate of the enzymatic reaction is not dihydrodipicolinate (DHDP) but in fact (2S,4S)-4-hydroxy-2,3,4,5-tetrahydrodipicolinic acid (HTPA), the product released by the DapA-catalyzed reaction.</text>
</comment>
<proteinExistence type="inferred from homology"/>
<accession>Q1BZ73</accession>
<feature type="chain" id="PRO_1000008539" description="4-hydroxy-tetrahydrodipicolinate reductase">
    <location>
        <begin position="1"/>
        <end position="265"/>
    </location>
</feature>
<feature type="active site" description="Proton donor/acceptor" evidence="1">
    <location>
        <position position="153"/>
    </location>
</feature>
<feature type="active site" description="Proton donor" evidence="1">
    <location>
        <position position="157"/>
    </location>
</feature>
<feature type="binding site" evidence="1">
    <location>
        <begin position="7"/>
        <end position="12"/>
    </location>
    <ligand>
        <name>NAD(+)</name>
        <dbReference type="ChEBI" id="CHEBI:57540"/>
    </ligand>
</feature>
<feature type="binding site" evidence="1">
    <location>
        <position position="33"/>
    </location>
    <ligand>
        <name>NAD(+)</name>
        <dbReference type="ChEBI" id="CHEBI:57540"/>
    </ligand>
</feature>
<feature type="binding site" evidence="1">
    <location>
        <position position="34"/>
    </location>
    <ligand>
        <name>NADP(+)</name>
        <dbReference type="ChEBI" id="CHEBI:58349"/>
    </ligand>
</feature>
<feature type="binding site" evidence="1">
    <location>
        <begin position="96"/>
        <end position="98"/>
    </location>
    <ligand>
        <name>NAD(+)</name>
        <dbReference type="ChEBI" id="CHEBI:57540"/>
    </ligand>
</feature>
<feature type="binding site" evidence="1">
    <location>
        <begin position="120"/>
        <end position="123"/>
    </location>
    <ligand>
        <name>NAD(+)</name>
        <dbReference type="ChEBI" id="CHEBI:57540"/>
    </ligand>
</feature>
<feature type="binding site" evidence="1">
    <location>
        <position position="154"/>
    </location>
    <ligand>
        <name>(S)-2,3,4,5-tetrahydrodipicolinate</name>
        <dbReference type="ChEBI" id="CHEBI:16845"/>
    </ligand>
</feature>
<feature type="binding site" evidence="1">
    <location>
        <begin position="163"/>
        <end position="164"/>
    </location>
    <ligand>
        <name>(S)-2,3,4,5-tetrahydrodipicolinate</name>
        <dbReference type="ChEBI" id="CHEBI:16845"/>
    </ligand>
</feature>
<gene>
    <name evidence="1" type="primary">dapB</name>
    <name type="ordered locus">Bcen_0168</name>
</gene>
<keyword id="KW-0028">Amino-acid biosynthesis</keyword>
<keyword id="KW-0963">Cytoplasm</keyword>
<keyword id="KW-0220">Diaminopimelate biosynthesis</keyword>
<keyword id="KW-0457">Lysine biosynthesis</keyword>
<keyword id="KW-0520">NAD</keyword>
<keyword id="KW-0521">NADP</keyword>
<keyword id="KW-0560">Oxidoreductase</keyword>
<reference key="1">
    <citation type="submission" date="2006-05" db="EMBL/GenBank/DDBJ databases">
        <title>Complete sequence of chromosome 1 of Burkholderia cenocepacia AU 1054.</title>
        <authorList>
            <consortium name="US DOE Joint Genome Institute"/>
            <person name="Copeland A."/>
            <person name="Lucas S."/>
            <person name="Lapidus A."/>
            <person name="Barry K."/>
            <person name="Detter J.C."/>
            <person name="Glavina del Rio T."/>
            <person name="Hammon N."/>
            <person name="Israni S."/>
            <person name="Dalin E."/>
            <person name="Tice H."/>
            <person name="Pitluck S."/>
            <person name="Chain P."/>
            <person name="Malfatti S."/>
            <person name="Shin M."/>
            <person name="Vergez L."/>
            <person name="Schmutz J."/>
            <person name="Larimer F."/>
            <person name="Land M."/>
            <person name="Hauser L."/>
            <person name="Kyrpides N."/>
            <person name="Lykidis A."/>
            <person name="LiPuma J.J."/>
            <person name="Konstantinidis K."/>
            <person name="Tiedje J.M."/>
            <person name="Richardson P."/>
        </authorList>
    </citation>
    <scope>NUCLEOTIDE SEQUENCE [LARGE SCALE GENOMIC DNA]</scope>
    <source>
        <strain>AU 1054</strain>
    </source>
</reference>